<sequence length="48" mass="5721">MRKKVVLSCEECKNRNYSTMKDTSSVERLEIKKFCKTCNQHTVHKETK</sequence>
<evidence type="ECO:0000255" key="1">
    <source>
        <dbReference type="HAMAP-Rule" id="MF_00294"/>
    </source>
</evidence>
<comment type="similarity">
    <text evidence="1">Belongs to the bacterial ribosomal protein bL33 family.</text>
</comment>
<reference key="1">
    <citation type="journal article" date="2003" name="Nature">
        <title>The genome sequence of Bacillus anthracis Ames and comparison to closely related bacteria.</title>
        <authorList>
            <person name="Read T.D."/>
            <person name="Peterson S.N."/>
            <person name="Tourasse N.J."/>
            <person name="Baillie L.W."/>
            <person name="Paulsen I.T."/>
            <person name="Nelson K.E."/>
            <person name="Tettelin H."/>
            <person name="Fouts D.E."/>
            <person name="Eisen J.A."/>
            <person name="Gill S.R."/>
            <person name="Holtzapple E.K."/>
            <person name="Okstad O.A."/>
            <person name="Helgason E."/>
            <person name="Rilstone J."/>
            <person name="Wu M."/>
            <person name="Kolonay J.F."/>
            <person name="Beanan M.J."/>
            <person name="Dodson R.J."/>
            <person name="Brinkac L.M."/>
            <person name="Gwinn M.L."/>
            <person name="DeBoy R.T."/>
            <person name="Madpu R."/>
            <person name="Daugherty S.C."/>
            <person name="Durkin A.S."/>
            <person name="Haft D.H."/>
            <person name="Nelson W.C."/>
            <person name="Peterson J.D."/>
            <person name="Pop M."/>
            <person name="Khouri H.M."/>
            <person name="Radune D."/>
            <person name="Benton J.L."/>
            <person name="Mahamoud Y."/>
            <person name="Jiang L."/>
            <person name="Hance I.R."/>
            <person name="Weidman J.F."/>
            <person name="Berry K.J."/>
            <person name="Plaut R.D."/>
            <person name="Wolf A.M."/>
            <person name="Watkins K.L."/>
            <person name="Nierman W.C."/>
            <person name="Hazen A."/>
            <person name="Cline R.T."/>
            <person name="Redmond C."/>
            <person name="Thwaite J.E."/>
            <person name="White O."/>
            <person name="Salzberg S.L."/>
            <person name="Thomason B."/>
            <person name="Friedlander A.M."/>
            <person name="Koehler T.M."/>
            <person name="Hanna P.C."/>
            <person name="Kolstoe A.-B."/>
            <person name="Fraser C.M."/>
        </authorList>
    </citation>
    <scope>NUCLEOTIDE SEQUENCE [LARGE SCALE GENOMIC DNA]</scope>
    <source>
        <strain>Ames / isolate Porton</strain>
    </source>
</reference>
<reference key="2">
    <citation type="submission" date="2004-01" db="EMBL/GenBank/DDBJ databases">
        <title>Complete genome sequence of Bacillus anthracis Sterne.</title>
        <authorList>
            <person name="Brettin T.S."/>
            <person name="Bruce D."/>
            <person name="Challacombe J.F."/>
            <person name="Gilna P."/>
            <person name="Han C."/>
            <person name="Hill K."/>
            <person name="Hitchcock P."/>
            <person name="Jackson P."/>
            <person name="Keim P."/>
            <person name="Longmire J."/>
            <person name="Lucas S."/>
            <person name="Okinaka R."/>
            <person name="Richardson P."/>
            <person name="Rubin E."/>
            <person name="Tice H."/>
        </authorList>
    </citation>
    <scope>NUCLEOTIDE SEQUENCE [LARGE SCALE GENOMIC DNA]</scope>
    <source>
        <strain>Sterne</strain>
    </source>
</reference>
<reference key="3">
    <citation type="journal article" date="2009" name="J. Bacteriol.">
        <title>The complete genome sequence of Bacillus anthracis Ames 'Ancestor'.</title>
        <authorList>
            <person name="Ravel J."/>
            <person name="Jiang L."/>
            <person name="Stanley S.T."/>
            <person name="Wilson M.R."/>
            <person name="Decker R.S."/>
            <person name="Read T.D."/>
            <person name="Worsham P."/>
            <person name="Keim P.S."/>
            <person name="Salzberg S.L."/>
            <person name="Fraser-Liggett C.M."/>
            <person name="Rasko D.A."/>
        </authorList>
    </citation>
    <scope>NUCLEOTIDE SEQUENCE [LARGE SCALE GENOMIC DNA]</scope>
    <source>
        <strain>Ames ancestor</strain>
    </source>
</reference>
<protein>
    <recommendedName>
        <fullName evidence="1">Large ribosomal subunit protein bL33A</fullName>
    </recommendedName>
    <alternativeName>
        <fullName evidence="1">50S ribosomal protein L33 1</fullName>
    </alternativeName>
</protein>
<dbReference type="EMBL" id="AE016879">
    <property type="protein sequence ID" value="AAP24148.1"/>
    <property type="molecule type" value="Genomic_DNA"/>
</dbReference>
<dbReference type="EMBL" id="AE017334">
    <property type="protein sequence ID" value="AAT35251.1"/>
    <property type="molecule type" value="Genomic_DNA"/>
</dbReference>
<dbReference type="EMBL" id="AE017225">
    <property type="protein sequence ID" value="AAT52431.1"/>
    <property type="molecule type" value="Genomic_DNA"/>
</dbReference>
<dbReference type="RefSeq" id="NP_842662.1">
    <property type="nucleotide sequence ID" value="NC_003997.3"/>
</dbReference>
<dbReference type="RefSeq" id="YP_026380.1">
    <property type="nucleotide sequence ID" value="NC_005945.1"/>
</dbReference>
<dbReference type="SMR" id="Q81VU6"/>
<dbReference type="STRING" id="261594.GBAA_0094"/>
<dbReference type="KEGG" id="ban:BA_0094"/>
<dbReference type="KEGG" id="bar:GBAA_0094"/>
<dbReference type="KEGG" id="bat:BAS0094"/>
<dbReference type="PATRIC" id="fig|198094.11.peg.91"/>
<dbReference type="eggNOG" id="COG0267">
    <property type="taxonomic scope" value="Bacteria"/>
</dbReference>
<dbReference type="HOGENOM" id="CLU_190949_0_1_9"/>
<dbReference type="OrthoDB" id="9801333at2"/>
<dbReference type="Proteomes" id="UP000000427">
    <property type="component" value="Chromosome"/>
</dbReference>
<dbReference type="Proteomes" id="UP000000594">
    <property type="component" value="Chromosome"/>
</dbReference>
<dbReference type="GO" id="GO:0005737">
    <property type="term" value="C:cytoplasm"/>
    <property type="evidence" value="ECO:0007669"/>
    <property type="project" value="UniProtKB-ARBA"/>
</dbReference>
<dbReference type="GO" id="GO:1990904">
    <property type="term" value="C:ribonucleoprotein complex"/>
    <property type="evidence" value="ECO:0007669"/>
    <property type="project" value="UniProtKB-KW"/>
</dbReference>
<dbReference type="GO" id="GO:0005840">
    <property type="term" value="C:ribosome"/>
    <property type="evidence" value="ECO:0007669"/>
    <property type="project" value="UniProtKB-KW"/>
</dbReference>
<dbReference type="GO" id="GO:0003735">
    <property type="term" value="F:structural constituent of ribosome"/>
    <property type="evidence" value="ECO:0007669"/>
    <property type="project" value="InterPro"/>
</dbReference>
<dbReference type="GO" id="GO:0006412">
    <property type="term" value="P:translation"/>
    <property type="evidence" value="ECO:0007669"/>
    <property type="project" value="UniProtKB-UniRule"/>
</dbReference>
<dbReference type="Gene3D" id="2.20.28.120">
    <property type="entry name" value="Ribosomal protein L33"/>
    <property type="match status" value="1"/>
</dbReference>
<dbReference type="HAMAP" id="MF_00294">
    <property type="entry name" value="Ribosomal_bL33"/>
    <property type="match status" value="1"/>
</dbReference>
<dbReference type="InterPro" id="IPR001705">
    <property type="entry name" value="Ribosomal_bL33"/>
</dbReference>
<dbReference type="InterPro" id="IPR038584">
    <property type="entry name" value="Ribosomal_bL33_sf"/>
</dbReference>
<dbReference type="InterPro" id="IPR011332">
    <property type="entry name" value="Ribosomal_zn-bd"/>
</dbReference>
<dbReference type="NCBIfam" id="NF001764">
    <property type="entry name" value="PRK00504.1"/>
    <property type="match status" value="1"/>
</dbReference>
<dbReference type="NCBIfam" id="NF001860">
    <property type="entry name" value="PRK00595.1"/>
    <property type="match status" value="1"/>
</dbReference>
<dbReference type="NCBIfam" id="TIGR01023">
    <property type="entry name" value="rpmG_bact"/>
    <property type="match status" value="1"/>
</dbReference>
<dbReference type="Pfam" id="PF00471">
    <property type="entry name" value="Ribosomal_L33"/>
    <property type="match status" value="1"/>
</dbReference>
<dbReference type="SUPFAM" id="SSF57829">
    <property type="entry name" value="Zn-binding ribosomal proteins"/>
    <property type="match status" value="1"/>
</dbReference>
<organism>
    <name type="scientific">Bacillus anthracis</name>
    <dbReference type="NCBI Taxonomy" id="1392"/>
    <lineage>
        <taxon>Bacteria</taxon>
        <taxon>Bacillati</taxon>
        <taxon>Bacillota</taxon>
        <taxon>Bacilli</taxon>
        <taxon>Bacillales</taxon>
        <taxon>Bacillaceae</taxon>
        <taxon>Bacillus</taxon>
        <taxon>Bacillus cereus group</taxon>
    </lineage>
</organism>
<accession>Q81VU6</accession>
<accession>Q6I4V0</accession>
<accession>Q6KIU9</accession>
<gene>
    <name evidence="1" type="primary">rpmG1</name>
    <name type="ordered locus">BA_0094</name>
    <name type="ordered locus">GBAA_0094</name>
    <name type="ordered locus">BAS0094</name>
</gene>
<feature type="chain" id="PRO_0000356380" description="Large ribosomal subunit protein bL33A">
    <location>
        <begin position="1"/>
        <end position="48"/>
    </location>
</feature>
<name>RL331_BACAN</name>
<proteinExistence type="inferred from homology"/>
<keyword id="KW-1185">Reference proteome</keyword>
<keyword id="KW-0687">Ribonucleoprotein</keyword>
<keyword id="KW-0689">Ribosomal protein</keyword>